<name>RLPA_NOSS1</name>
<evidence type="ECO:0000255" key="1">
    <source>
        <dbReference type="HAMAP-Rule" id="MF_02071"/>
    </source>
</evidence>
<evidence type="ECO:0000256" key="2">
    <source>
        <dbReference type="SAM" id="MobiDB-lite"/>
    </source>
</evidence>
<organism>
    <name type="scientific">Nostoc sp. (strain PCC 7120 / SAG 25.82 / UTEX 2576)</name>
    <dbReference type="NCBI Taxonomy" id="103690"/>
    <lineage>
        <taxon>Bacteria</taxon>
        <taxon>Bacillati</taxon>
        <taxon>Cyanobacteriota</taxon>
        <taxon>Cyanophyceae</taxon>
        <taxon>Nostocales</taxon>
        <taxon>Nostocaceae</taxon>
        <taxon>Nostoc</taxon>
    </lineage>
</organism>
<keyword id="KW-0961">Cell wall biogenesis/degradation</keyword>
<keyword id="KW-0456">Lyase</keyword>
<keyword id="KW-1185">Reference proteome</keyword>
<keyword id="KW-0732">Signal</keyword>
<feature type="signal peptide" evidence="1">
    <location>
        <begin position="1"/>
        <end position="25"/>
    </location>
</feature>
<feature type="chain" id="PRO_0000190004" description="Probable endolytic peptidoglycan transglycosylase RlpA" evidence="1">
    <location>
        <begin position="26"/>
        <end position="371"/>
    </location>
</feature>
<feature type="region of interest" description="Disordered" evidence="2">
    <location>
        <begin position="177"/>
        <end position="196"/>
    </location>
</feature>
<feature type="compositionally biased region" description="Low complexity" evidence="2">
    <location>
        <begin position="177"/>
        <end position="191"/>
    </location>
</feature>
<sequence>MNQRHLWTIVALSVTVLGTPAVGRTQTTKATAPAQQILASDAVKVGEFQSSEGKRTSDAVITSIHPHNLGGRRAATLFIRKIPVLTFVSSNPVASVETKVGAIGDNEGVQPYALNTEKSVQVASLGNLADARIQNRSQNDDPVKRASLVAAKINQLIRDNVKADQITVSWKGADSSLVASQSQNKSSSSQQKSERYTIKVKNQELVEINQNTRLADSTNNLANDALQATNRLRRLVGNASPLKEIANLPARSPKRSSNPIANLPQRIASSIRLSFQGIASFYGRGDGFAGRPTATGERFNPEAMTAAHRSLPFGTRVRVTNTRNGRSVVVRINDRGPFTRGRVIDLSTGAARVLGMIGSGVAPVRIEVLGR</sequence>
<proteinExistence type="inferred from homology"/>
<reference key="1">
    <citation type="journal article" date="2001" name="DNA Res.">
        <title>Complete genomic sequence of the filamentous nitrogen-fixing cyanobacterium Anabaena sp. strain PCC 7120.</title>
        <authorList>
            <person name="Kaneko T."/>
            <person name="Nakamura Y."/>
            <person name="Wolk C.P."/>
            <person name="Kuritz T."/>
            <person name="Sasamoto S."/>
            <person name="Watanabe A."/>
            <person name="Iriguchi M."/>
            <person name="Ishikawa A."/>
            <person name="Kawashima K."/>
            <person name="Kimura T."/>
            <person name="Kishida Y."/>
            <person name="Kohara M."/>
            <person name="Matsumoto M."/>
            <person name="Matsuno A."/>
            <person name="Muraki A."/>
            <person name="Nakazaki N."/>
            <person name="Shimpo S."/>
            <person name="Sugimoto M."/>
            <person name="Takazawa M."/>
            <person name="Yamada M."/>
            <person name="Yasuda M."/>
            <person name="Tabata S."/>
        </authorList>
    </citation>
    <scope>NUCLEOTIDE SEQUENCE [LARGE SCALE GENOMIC DNA]</scope>
    <source>
        <strain>PCC 7120 / SAG 25.82 / UTEX 2576</strain>
    </source>
</reference>
<dbReference type="EC" id="4.2.2.-" evidence="1"/>
<dbReference type="EMBL" id="BA000019">
    <property type="protein sequence ID" value="BAB74634.1"/>
    <property type="molecule type" value="Genomic_DNA"/>
</dbReference>
<dbReference type="PIR" id="AH2172">
    <property type="entry name" value="AH2172"/>
</dbReference>
<dbReference type="RefSeq" id="WP_010997086.1">
    <property type="nucleotide sequence ID" value="NZ_RSCN01000003.1"/>
</dbReference>
<dbReference type="SMR" id="Q8YSZ4"/>
<dbReference type="STRING" id="103690.gene:10494971"/>
<dbReference type="KEGG" id="ana:alr2935"/>
<dbReference type="eggNOG" id="COG0797">
    <property type="taxonomic scope" value="Bacteria"/>
</dbReference>
<dbReference type="OrthoDB" id="9779128at2"/>
<dbReference type="Proteomes" id="UP000002483">
    <property type="component" value="Chromosome"/>
</dbReference>
<dbReference type="GO" id="GO:0008932">
    <property type="term" value="F:lytic endotransglycosylase activity"/>
    <property type="evidence" value="ECO:0007669"/>
    <property type="project" value="UniProtKB-UniRule"/>
</dbReference>
<dbReference type="GO" id="GO:0071555">
    <property type="term" value="P:cell wall organization"/>
    <property type="evidence" value="ECO:0007669"/>
    <property type="project" value="UniProtKB-KW"/>
</dbReference>
<dbReference type="GO" id="GO:0000270">
    <property type="term" value="P:peptidoglycan metabolic process"/>
    <property type="evidence" value="ECO:0007669"/>
    <property type="project" value="UniProtKB-UniRule"/>
</dbReference>
<dbReference type="CDD" id="cd22268">
    <property type="entry name" value="DPBB_RlpA-like"/>
    <property type="match status" value="1"/>
</dbReference>
<dbReference type="Gene3D" id="2.40.40.10">
    <property type="entry name" value="RlpA-like domain"/>
    <property type="match status" value="1"/>
</dbReference>
<dbReference type="HAMAP" id="MF_02071">
    <property type="entry name" value="RlpA"/>
    <property type="match status" value="1"/>
</dbReference>
<dbReference type="InterPro" id="IPR034718">
    <property type="entry name" value="RlpA"/>
</dbReference>
<dbReference type="InterPro" id="IPR009009">
    <property type="entry name" value="RlpA-like_DPBB"/>
</dbReference>
<dbReference type="InterPro" id="IPR036908">
    <property type="entry name" value="RlpA-like_sf"/>
</dbReference>
<dbReference type="InterPro" id="IPR012997">
    <property type="entry name" value="RplA"/>
</dbReference>
<dbReference type="NCBIfam" id="TIGR00413">
    <property type="entry name" value="rlpA"/>
    <property type="match status" value="1"/>
</dbReference>
<dbReference type="PANTHER" id="PTHR34183">
    <property type="entry name" value="ENDOLYTIC PEPTIDOGLYCAN TRANSGLYCOSYLASE RLPA"/>
    <property type="match status" value="1"/>
</dbReference>
<dbReference type="PANTHER" id="PTHR34183:SF8">
    <property type="entry name" value="ENDOLYTIC PEPTIDOGLYCAN TRANSGLYCOSYLASE RLPA-RELATED"/>
    <property type="match status" value="1"/>
</dbReference>
<dbReference type="Pfam" id="PF03330">
    <property type="entry name" value="DPBB_1"/>
    <property type="match status" value="1"/>
</dbReference>
<dbReference type="SUPFAM" id="SSF50685">
    <property type="entry name" value="Barwin-like endoglucanases"/>
    <property type="match status" value="1"/>
</dbReference>
<gene>
    <name evidence="1" type="primary">rlpA</name>
    <name type="ordered locus">alr2935</name>
</gene>
<comment type="function">
    <text evidence="1">Lytic transglycosylase with a strong preference for naked glycan strands that lack stem peptides.</text>
</comment>
<comment type="similarity">
    <text evidence="1">Belongs to the RlpA family.</text>
</comment>
<accession>Q8YSZ4</accession>
<protein>
    <recommendedName>
        <fullName evidence="1">Probable endolytic peptidoglycan transglycosylase RlpA</fullName>
        <ecNumber evidence="1">4.2.2.-</ecNumber>
    </recommendedName>
</protein>